<gene>
    <name evidence="1" type="primary">bioD</name>
    <name type="ordered locus">RB5694</name>
</gene>
<feature type="chain" id="PRO_0000226299" description="ATP-dependent dethiobiotin synthetase BioD">
    <location>
        <begin position="1"/>
        <end position="256"/>
    </location>
</feature>
<feature type="active site" evidence="1">
    <location>
        <position position="38"/>
    </location>
</feature>
<feature type="binding site" evidence="1">
    <location>
        <begin position="13"/>
        <end position="18"/>
    </location>
    <ligand>
        <name>ATP</name>
        <dbReference type="ChEBI" id="CHEBI:30616"/>
    </ligand>
</feature>
<feature type="binding site" evidence="1">
    <location>
        <position position="17"/>
    </location>
    <ligand>
        <name>Mg(2+)</name>
        <dbReference type="ChEBI" id="CHEBI:18420"/>
    </ligand>
</feature>
<feature type="binding site" evidence="1">
    <location>
        <position position="42"/>
    </location>
    <ligand>
        <name>substrate</name>
    </ligand>
</feature>
<feature type="binding site" evidence="1">
    <location>
        <position position="56"/>
    </location>
    <ligand>
        <name>ATP</name>
        <dbReference type="ChEBI" id="CHEBI:30616"/>
    </ligand>
</feature>
<feature type="binding site" evidence="1">
    <location>
        <position position="56"/>
    </location>
    <ligand>
        <name>Mg(2+)</name>
        <dbReference type="ChEBI" id="CHEBI:18420"/>
    </ligand>
</feature>
<feature type="binding site" evidence="1">
    <location>
        <begin position="118"/>
        <end position="121"/>
    </location>
    <ligand>
        <name>ATP</name>
        <dbReference type="ChEBI" id="CHEBI:30616"/>
    </ligand>
</feature>
<feature type="binding site" evidence="1">
    <location>
        <position position="118"/>
    </location>
    <ligand>
        <name>Mg(2+)</name>
        <dbReference type="ChEBI" id="CHEBI:18420"/>
    </ligand>
</feature>
<feature type="binding site" evidence="1">
    <location>
        <begin position="187"/>
        <end position="188"/>
    </location>
    <ligand>
        <name>ATP</name>
        <dbReference type="ChEBI" id="CHEBI:30616"/>
    </ligand>
</feature>
<organism>
    <name type="scientific">Rhodopirellula baltica (strain DSM 10527 / NCIMB 13988 / SH1)</name>
    <dbReference type="NCBI Taxonomy" id="243090"/>
    <lineage>
        <taxon>Bacteria</taxon>
        <taxon>Pseudomonadati</taxon>
        <taxon>Planctomycetota</taxon>
        <taxon>Planctomycetia</taxon>
        <taxon>Pirellulales</taxon>
        <taxon>Pirellulaceae</taxon>
        <taxon>Rhodopirellula</taxon>
    </lineage>
</organism>
<dbReference type="EC" id="6.3.3.3" evidence="1"/>
<dbReference type="EMBL" id="BX294142">
    <property type="protein sequence ID" value="CAD74380.1"/>
    <property type="status" value="ALT_INIT"/>
    <property type="molecule type" value="Genomic_DNA"/>
</dbReference>
<dbReference type="RefSeq" id="NP_866839.1">
    <property type="nucleotide sequence ID" value="NC_005027.1"/>
</dbReference>
<dbReference type="RefSeq" id="WP_164921893.1">
    <property type="nucleotide sequence ID" value="NC_005027.1"/>
</dbReference>
<dbReference type="SMR" id="Q7URG0"/>
<dbReference type="FunCoup" id="Q7URG0">
    <property type="interactions" value="382"/>
</dbReference>
<dbReference type="STRING" id="243090.RB5694"/>
<dbReference type="EnsemblBacteria" id="CAD74380">
    <property type="protein sequence ID" value="CAD74380"/>
    <property type="gene ID" value="RB5694"/>
</dbReference>
<dbReference type="KEGG" id="rba:RB5694"/>
<dbReference type="PATRIC" id="fig|243090.15.peg.2733"/>
<dbReference type="eggNOG" id="COG0132">
    <property type="taxonomic scope" value="Bacteria"/>
</dbReference>
<dbReference type="HOGENOM" id="CLU_072551_0_0_0"/>
<dbReference type="InParanoid" id="Q7URG0"/>
<dbReference type="OrthoDB" id="9802097at2"/>
<dbReference type="UniPathway" id="UPA00078">
    <property type="reaction ID" value="UER00161"/>
</dbReference>
<dbReference type="Proteomes" id="UP000001025">
    <property type="component" value="Chromosome"/>
</dbReference>
<dbReference type="GO" id="GO:0005829">
    <property type="term" value="C:cytosol"/>
    <property type="evidence" value="ECO:0000318"/>
    <property type="project" value="GO_Central"/>
</dbReference>
<dbReference type="GO" id="GO:0005524">
    <property type="term" value="F:ATP binding"/>
    <property type="evidence" value="ECO:0007669"/>
    <property type="project" value="UniProtKB-UniRule"/>
</dbReference>
<dbReference type="GO" id="GO:0004141">
    <property type="term" value="F:dethiobiotin synthase activity"/>
    <property type="evidence" value="ECO:0000318"/>
    <property type="project" value="GO_Central"/>
</dbReference>
<dbReference type="GO" id="GO:0000287">
    <property type="term" value="F:magnesium ion binding"/>
    <property type="evidence" value="ECO:0007669"/>
    <property type="project" value="UniProtKB-UniRule"/>
</dbReference>
<dbReference type="GO" id="GO:0009102">
    <property type="term" value="P:biotin biosynthetic process"/>
    <property type="evidence" value="ECO:0000318"/>
    <property type="project" value="GO_Central"/>
</dbReference>
<dbReference type="CDD" id="cd03109">
    <property type="entry name" value="DTBS"/>
    <property type="match status" value="1"/>
</dbReference>
<dbReference type="FunFam" id="3.40.50.300:FF:005178">
    <property type="entry name" value="ATP-dependent dethiobiotin synthetase BioD"/>
    <property type="match status" value="1"/>
</dbReference>
<dbReference type="Gene3D" id="3.40.50.300">
    <property type="entry name" value="P-loop containing nucleotide triphosphate hydrolases"/>
    <property type="match status" value="1"/>
</dbReference>
<dbReference type="HAMAP" id="MF_00336">
    <property type="entry name" value="BioD"/>
    <property type="match status" value="1"/>
</dbReference>
<dbReference type="InterPro" id="IPR004472">
    <property type="entry name" value="DTB_synth_BioD"/>
</dbReference>
<dbReference type="InterPro" id="IPR027417">
    <property type="entry name" value="P-loop_NTPase"/>
</dbReference>
<dbReference type="NCBIfam" id="TIGR00347">
    <property type="entry name" value="bioD"/>
    <property type="match status" value="1"/>
</dbReference>
<dbReference type="PANTHER" id="PTHR43210:SF2">
    <property type="entry name" value="ATP-DEPENDENT DETHIOBIOTIN SYNTHETASE BIOD 2"/>
    <property type="match status" value="1"/>
</dbReference>
<dbReference type="PANTHER" id="PTHR43210">
    <property type="entry name" value="DETHIOBIOTIN SYNTHETASE"/>
    <property type="match status" value="1"/>
</dbReference>
<dbReference type="Pfam" id="PF13500">
    <property type="entry name" value="AAA_26"/>
    <property type="match status" value="1"/>
</dbReference>
<dbReference type="PIRSF" id="PIRSF006755">
    <property type="entry name" value="DTB_synth"/>
    <property type="match status" value="1"/>
</dbReference>
<dbReference type="SUPFAM" id="SSF52540">
    <property type="entry name" value="P-loop containing nucleoside triphosphate hydrolases"/>
    <property type="match status" value="1"/>
</dbReference>
<protein>
    <recommendedName>
        <fullName evidence="1">ATP-dependent dethiobiotin synthetase BioD</fullName>
        <ecNumber evidence="1">6.3.3.3</ecNumber>
    </recommendedName>
    <alternativeName>
        <fullName evidence="1">DTB synthetase</fullName>
        <shortName evidence="1">DTBS</shortName>
    </alternativeName>
    <alternativeName>
        <fullName evidence="1">Dethiobiotin synthase</fullName>
    </alternativeName>
</protein>
<evidence type="ECO:0000255" key="1">
    <source>
        <dbReference type="HAMAP-Rule" id="MF_00336"/>
    </source>
</evidence>
<evidence type="ECO:0000305" key="2"/>
<proteinExistence type="inferred from homology"/>
<keyword id="KW-0067">ATP-binding</keyword>
<keyword id="KW-0093">Biotin biosynthesis</keyword>
<keyword id="KW-0963">Cytoplasm</keyword>
<keyword id="KW-0436">Ligase</keyword>
<keyword id="KW-0460">Magnesium</keyword>
<keyword id="KW-0479">Metal-binding</keyword>
<keyword id="KW-0547">Nucleotide-binding</keyword>
<keyword id="KW-1185">Reference proteome</keyword>
<accession>Q7URG0</accession>
<comment type="function">
    <text evidence="1">Catalyzes a mechanistically unusual reaction, the ATP-dependent insertion of CO2 between the N7 and N8 nitrogen atoms of 7,8-diaminopelargonic acid (DAPA, also called 7,8-diammoniononanoate) to form a ureido ring.</text>
</comment>
<comment type="catalytic activity">
    <reaction evidence="1">
        <text>(7R,8S)-7,8-diammoniononanoate + CO2 + ATP = (4R,5S)-dethiobiotin + ADP + phosphate + 3 H(+)</text>
        <dbReference type="Rhea" id="RHEA:15805"/>
        <dbReference type="ChEBI" id="CHEBI:15378"/>
        <dbReference type="ChEBI" id="CHEBI:16526"/>
        <dbReference type="ChEBI" id="CHEBI:30616"/>
        <dbReference type="ChEBI" id="CHEBI:43474"/>
        <dbReference type="ChEBI" id="CHEBI:149469"/>
        <dbReference type="ChEBI" id="CHEBI:149473"/>
        <dbReference type="ChEBI" id="CHEBI:456216"/>
        <dbReference type="EC" id="6.3.3.3"/>
    </reaction>
</comment>
<comment type="cofactor">
    <cofactor evidence="1">
        <name>Mg(2+)</name>
        <dbReference type="ChEBI" id="CHEBI:18420"/>
    </cofactor>
</comment>
<comment type="pathway">
    <text evidence="1">Cofactor biosynthesis; biotin biosynthesis; biotin from 7,8-diaminononanoate: step 1/2.</text>
</comment>
<comment type="subunit">
    <text evidence="1">Homodimer.</text>
</comment>
<comment type="subcellular location">
    <subcellularLocation>
        <location evidence="1">Cytoplasm</location>
    </subcellularLocation>
</comment>
<comment type="similarity">
    <text evidence="1">Belongs to the dethiobiotin synthetase family.</text>
</comment>
<comment type="sequence caution" evidence="2">
    <conflict type="erroneous initiation">
        <sequence resource="EMBL-CDS" id="CAD74380"/>
    </conflict>
    <text>Extended N-terminus.</text>
</comment>
<reference key="1">
    <citation type="journal article" date="2003" name="Proc. Natl. Acad. Sci. U.S.A.">
        <title>Complete genome sequence of the marine planctomycete Pirellula sp. strain 1.</title>
        <authorList>
            <person name="Gloeckner F.O."/>
            <person name="Kube M."/>
            <person name="Bauer M."/>
            <person name="Teeling H."/>
            <person name="Lombardot T."/>
            <person name="Ludwig W."/>
            <person name="Gade D."/>
            <person name="Beck A."/>
            <person name="Borzym K."/>
            <person name="Heitmann K."/>
            <person name="Rabus R."/>
            <person name="Schlesner H."/>
            <person name="Amann R."/>
            <person name="Reinhardt R."/>
        </authorList>
    </citation>
    <scope>NUCLEOTIDE SEQUENCE [LARGE SCALE GENOMIC DNA]</scope>
    <source>
        <strain>DSM 10527 / NCIMB 13988 / SH1</strain>
    </source>
</reference>
<name>BIOD_RHOBA</name>
<sequence length="256" mass="27750">MASLYFVTGTDTEVGKTYCTAKTVERMRECGQRVGVYKPVASGCELRADGQRYSVDAATLWQAAGRPKNIDAVCPQRFLAALSPPQSAAREGVKVDTRQLRDGLAIWCDGDFDVVMIEGAGGLFSPISDDWLNVDLAIEMKRWSDQNGHSFELLLVAPDRLGVLHHVISTSRAAESAGIPIAGLILNRMDDHADESTQTNAEDLRRWCGIPMVASVRQPSGPLVVFSGPNGRNASGETSRETAGGVNFLNQTTIRR</sequence>